<comment type="function">
    <text evidence="1">Catalyzes the transfer of an acyl group from acyl-phosphate (acyl-PO(4)) to glycerol-3-phosphate (G3P) to form lysophosphatidic acid (LPA). This enzyme utilizes acyl-phosphate as fatty acyl donor, but not acyl-CoA or acyl-ACP.</text>
</comment>
<comment type="catalytic activity">
    <reaction evidence="1">
        <text>an acyl phosphate + sn-glycerol 3-phosphate = a 1-acyl-sn-glycero-3-phosphate + phosphate</text>
        <dbReference type="Rhea" id="RHEA:34075"/>
        <dbReference type="ChEBI" id="CHEBI:43474"/>
        <dbReference type="ChEBI" id="CHEBI:57597"/>
        <dbReference type="ChEBI" id="CHEBI:57970"/>
        <dbReference type="ChEBI" id="CHEBI:59918"/>
        <dbReference type="EC" id="2.3.1.275"/>
    </reaction>
</comment>
<comment type="pathway">
    <text evidence="1">Lipid metabolism; phospholipid metabolism.</text>
</comment>
<comment type="subunit">
    <text evidence="1">Probably interacts with PlsX.</text>
</comment>
<comment type="subcellular location">
    <subcellularLocation>
        <location evidence="1">Cell inner membrane</location>
        <topology evidence="1">Multi-pass membrane protein</topology>
    </subcellularLocation>
</comment>
<comment type="similarity">
    <text evidence="1">Belongs to the PlsY family.</text>
</comment>
<proteinExistence type="inferred from homology"/>
<gene>
    <name evidence="1" type="primary">plsY</name>
    <name type="ordered locus">cce_3656</name>
</gene>
<protein>
    <recommendedName>
        <fullName evidence="1">Glycerol-3-phosphate acyltransferase</fullName>
    </recommendedName>
    <alternativeName>
        <fullName evidence="1">Acyl-PO4 G3P acyltransferase</fullName>
    </alternativeName>
    <alternativeName>
        <fullName evidence="1">Acyl-phosphate--glycerol-3-phosphate acyltransferase</fullName>
    </alternativeName>
    <alternativeName>
        <fullName evidence="1">G3P acyltransferase</fullName>
        <shortName evidence="1">GPAT</shortName>
        <ecNumber evidence="1">2.3.1.275</ecNumber>
    </alternativeName>
    <alternativeName>
        <fullName evidence="1">Lysophosphatidic acid synthase</fullName>
        <shortName evidence="1">LPA synthase</shortName>
    </alternativeName>
</protein>
<feature type="chain" id="PRO_1000149566" description="Glycerol-3-phosphate acyltransferase">
    <location>
        <begin position="1"/>
        <end position="215"/>
    </location>
</feature>
<feature type="transmembrane region" description="Helical" evidence="1">
    <location>
        <begin position="1"/>
        <end position="21"/>
    </location>
</feature>
<feature type="transmembrane region" description="Helical" evidence="1">
    <location>
        <begin position="57"/>
        <end position="77"/>
    </location>
</feature>
<feature type="transmembrane region" description="Helical" evidence="1">
    <location>
        <begin position="85"/>
        <end position="105"/>
    </location>
</feature>
<feature type="transmembrane region" description="Helical" evidence="1">
    <location>
        <begin position="126"/>
        <end position="146"/>
    </location>
</feature>
<feature type="transmembrane region" description="Helical" evidence="1">
    <location>
        <begin position="165"/>
        <end position="185"/>
    </location>
</feature>
<dbReference type="EC" id="2.3.1.275" evidence="1"/>
<dbReference type="EMBL" id="CP000806">
    <property type="protein sequence ID" value="ACB53004.1"/>
    <property type="molecule type" value="Genomic_DNA"/>
</dbReference>
<dbReference type="RefSeq" id="WP_009545185.1">
    <property type="nucleotide sequence ID" value="NC_010546.1"/>
</dbReference>
<dbReference type="SMR" id="B1X0W5"/>
<dbReference type="STRING" id="43989.cce_3656"/>
<dbReference type="KEGG" id="cyt:cce_3656"/>
<dbReference type="eggNOG" id="COG0344">
    <property type="taxonomic scope" value="Bacteria"/>
</dbReference>
<dbReference type="HOGENOM" id="CLU_081254_7_1_3"/>
<dbReference type="OrthoDB" id="9777124at2"/>
<dbReference type="UniPathway" id="UPA00085"/>
<dbReference type="Proteomes" id="UP000001203">
    <property type="component" value="Chromosome circular"/>
</dbReference>
<dbReference type="GO" id="GO:0005886">
    <property type="term" value="C:plasma membrane"/>
    <property type="evidence" value="ECO:0007669"/>
    <property type="project" value="UniProtKB-SubCell"/>
</dbReference>
<dbReference type="GO" id="GO:0043772">
    <property type="term" value="F:acyl-phosphate glycerol-3-phosphate acyltransferase activity"/>
    <property type="evidence" value="ECO:0007669"/>
    <property type="project" value="UniProtKB-UniRule"/>
</dbReference>
<dbReference type="GO" id="GO:0008654">
    <property type="term" value="P:phospholipid biosynthetic process"/>
    <property type="evidence" value="ECO:0007669"/>
    <property type="project" value="UniProtKB-UniRule"/>
</dbReference>
<dbReference type="HAMAP" id="MF_01043">
    <property type="entry name" value="PlsY"/>
    <property type="match status" value="1"/>
</dbReference>
<dbReference type="InterPro" id="IPR003811">
    <property type="entry name" value="G3P_acylTferase_PlsY"/>
</dbReference>
<dbReference type="NCBIfam" id="TIGR00023">
    <property type="entry name" value="glycerol-3-phosphate 1-O-acyltransferase PlsY"/>
    <property type="match status" value="1"/>
</dbReference>
<dbReference type="PANTHER" id="PTHR30309:SF0">
    <property type="entry name" value="GLYCEROL-3-PHOSPHATE ACYLTRANSFERASE-RELATED"/>
    <property type="match status" value="1"/>
</dbReference>
<dbReference type="PANTHER" id="PTHR30309">
    <property type="entry name" value="INNER MEMBRANE PROTEIN YGIH"/>
    <property type="match status" value="1"/>
</dbReference>
<dbReference type="Pfam" id="PF02660">
    <property type="entry name" value="G3P_acyltransf"/>
    <property type="match status" value="1"/>
</dbReference>
<dbReference type="SMART" id="SM01207">
    <property type="entry name" value="G3P_acyltransf"/>
    <property type="match status" value="1"/>
</dbReference>
<organism>
    <name type="scientific">Crocosphaera subtropica (strain ATCC 51142 / BH68)</name>
    <name type="common">Cyanothece sp. (strain ATCC 51142)</name>
    <dbReference type="NCBI Taxonomy" id="43989"/>
    <lineage>
        <taxon>Bacteria</taxon>
        <taxon>Bacillati</taxon>
        <taxon>Cyanobacteriota</taxon>
        <taxon>Cyanophyceae</taxon>
        <taxon>Oscillatoriophycideae</taxon>
        <taxon>Chroococcales</taxon>
        <taxon>Aphanothecaceae</taxon>
        <taxon>Crocosphaera</taxon>
        <taxon>Crocosphaera subtropica</taxon>
    </lineage>
</organism>
<evidence type="ECO:0000255" key="1">
    <source>
        <dbReference type="HAMAP-Rule" id="MF_01043"/>
    </source>
</evidence>
<name>PLSY_CROS5</name>
<sequence>MAFLISALLILIGYLLGSIPTGYLTGLHLKGIDVRQHGSGSTGATNILRTIGKRAAIFVLTVDLAKAMLAVILVKLWFFVESPEMIPLEWKSWLVVFAAIAAVLGHSKSIFLNFTGGKSVASSLGVLLVLNPIVALGTLGSFLAMLSLSRIVSLSSITGVVAVNVLMFGLHQPLPYCLFGVIVGLYVTFRHRTNIIRLLQGTEPRLGQKLQQEGS</sequence>
<reference key="1">
    <citation type="journal article" date="2008" name="Proc. Natl. Acad. Sci. U.S.A.">
        <title>The genome of Cyanothece 51142, a unicellular diazotrophic cyanobacterium important in the marine nitrogen cycle.</title>
        <authorList>
            <person name="Welsh E.A."/>
            <person name="Liberton M."/>
            <person name="Stoeckel J."/>
            <person name="Loh T."/>
            <person name="Elvitigala T."/>
            <person name="Wang C."/>
            <person name="Wollam A."/>
            <person name="Fulton R.S."/>
            <person name="Clifton S.W."/>
            <person name="Jacobs J.M."/>
            <person name="Aurora R."/>
            <person name="Ghosh B.K."/>
            <person name="Sherman L.A."/>
            <person name="Smith R.D."/>
            <person name="Wilson R.K."/>
            <person name="Pakrasi H.B."/>
        </authorList>
    </citation>
    <scope>NUCLEOTIDE SEQUENCE [LARGE SCALE GENOMIC DNA]</scope>
    <source>
        <strain>ATCC 51142 / BH68</strain>
    </source>
</reference>
<accession>B1X0W5</accession>
<keyword id="KW-0997">Cell inner membrane</keyword>
<keyword id="KW-1003">Cell membrane</keyword>
<keyword id="KW-0444">Lipid biosynthesis</keyword>
<keyword id="KW-0443">Lipid metabolism</keyword>
<keyword id="KW-0472">Membrane</keyword>
<keyword id="KW-0594">Phospholipid biosynthesis</keyword>
<keyword id="KW-1208">Phospholipid metabolism</keyword>
<keyword id="KW-1185">Reference proteome</keyword>
<keyword id="KW-0808">Transferase</keyword>
<keyword id="KW-0812">Transmembrane</keyword>
<keyword id="KW-1133">Transmembrane helix</keyword>